<name>POL1_RCMV</name>
<organismHost>
    <name type="scientific">Trifolium pratense</name>
    <name type="common">Red clover</name>
    <dbReference type="NCBI Taxonomy" id="57577"/>
</organismHost>
<proteinExistence type="inferred from homology"/>
<reference key="1">
    <citation type="journal article" date="1992" name="J. Gen. Virol.">
        <title>The nucleotide sequence of red clover mottle virus bottom component RNA.</title>
        <authorList>
            <person name="Shanks M."/>
            <person name="Lomonossoff G.P."/>
        </authorList>
    </citation>
    <scope>NUCLEOTIDE SEQUENCE</scope>
    <source>
        <strain>S</strain>
    </source>
</reference>
<reference key="2">
    <citation type="journal article" date="1990" name="J. Gen. Virol.">
        <title>The primary structure of the 24K protease from red clover mottle virus: implications for the mode of action of comovirus proteases.</title>
        <authorList>
            <person name="Shanks M."/>
            <person name="Lomonossoff G.P."/>
        </authorList>
    </citation>
    <scope>NUCLEOTIDE SEQUENCE OF 912-1167</scope>
</reference>
<dbReference type="EC" id="3.6.4.-"/>
<dbReference type="EC" id="3.4.22.-" evidence="1"/>
<dbReference type="EC" id="2.7.7.48" evidence="3"/>
<dbReference type="EMBL" id="X64886">
    <property type="protein sequence ID" value="CAA46104.1"/>
    <property type="molecule type" value="Unassigned_RNA"/>
</dbReference>
<dbReference type="EMBL" id="D00657">
    <property type="protein sequence ID" value="BAA00547.1"/>
    <property type="molecule type" value="Genomic_RNA"/>
</dbReference>
<dbReference type="PIR" id="JQ1657">
    <property type="entry name" value="JQ1657"/>
</dbReference>
<dbReference type="RefSeq" id="NP_620468.1">
    <property type="nucleotide sequence ID" value="NC_003741.1"/>
</dbReference>
<dbReference type="SMR" id="P35930"/>
<dbReference type="MEROPS" id="C03.003"/>
<dbReference type="GeneID" id="1502336"/>
<dbReference type="KEGG" id="vg:1502336"/>
<dbReference type="Proteomes" id="UP000006361">
    <property type="component" value="Genome"/>
</dbReference>
<dbReference type="GO" id="GO:0044165">
    <property type="term" value="C:host cell endoplasmic reticulum"/>
    <property type="evidence" value="ECO:0007669"/>
    <property type="project" value="UniProtKB-SubCell"/>
</dbReference>
<dbReference type="GO" id="GO:0033644">
    <property type="term" value="C:host cell membrane"/>
    <property type="evidence" value="ECO:0007669"/>
    <property type="project" value="UniProtKB-SubCell"/>
</dbReference>
<dbReference type="GO" id="GO:0044220">
    <property type="term" value="C:host cell perinuclear region of cytoplasm"/>
    <property type="evidence" value="ECO:0007669"/>
    <property type="project" value="UniProtKB-SubCell"/>
</dbReference>
<dbReference type="GO" id="GO:0016020">
    <property type="term" value="C:membrane"/>
    <property type="evidence" value="ECO:0007669"/>
    <property type="project" value="UniProtKB-KW"/>
</dbReference>
<dbReference type="GO" id="GO:0005524">
    <property type="term" value="F:ATP binding"/>
    <property type="evidence" value="ECO:0007669"/>
    <property type="project" value="UniProtKB-KW"/>
</dbReference>
<dbReference type="GO" id="GO:0004197">
    <property type="term" value="F:cysteine-type endopeptidase activity"/>
    <property type="evidence" value="ECO:0007669"/>
    <property type="project" value="InterPro"/>
</dbReference>
<dbReference type="GO" id="GO:0003723">
    <property type="term" value="F:RNA binding"/>
    <property type="evidence" value="ECO:0007669"/>
    <property type="project" value="InterPro"/>
</dbReference>
<dbReference type="GO" id="GO:0003724">
    <property type="term" value="F:RNA helicase activity"/>
    <property type="evidence" value="ECO:0007669"/>
    <property type="project" value="InterPro"/>
</dbReference>
<dbReference type="GO" id="GO:0003968">
    <property type="term" value="F:RNA-directed RNA polymerase activity"/>
    <property type="evidence" value="ECO:0007669"/>
    <property type="project" value="UniProtKB-KW"/>
</dbReference>
<dbReference type="GO" id="GO:0006351">
    <property type="term" value="P:DNA-templated transcription"/>
    <property type="evidence" value="ECO:0007669"/>
    <property type="project" value="InterPro"/>
</dbReference>
<dbReference type="GO" id="GO:0006508">
    <property type="term" value="P:proteolysis"/>
    <property type="evidence" value="ECO:0007669"/>
    <property type="project" value="UniProtKB-KW"/>
</dbReference>
<dbReference type="GO" id="GO:0039694">
    <property type="term" value="P:viral RNA genome replication"/>
    <property type="evidence" value="ECO:0007669"/>
    <property type="project" value="InterPro"/>
</dbReference>
<dbReference type="Gene3D" id="3.30.70.270">
    <property type="match status" value="1"/>
</dbReference>
<dbReference type="Gene3D" id="2.40.10.10">
    <property type="entry name" value="Trypsin-like serine proteases"/>
    <property type="match status" value="1"/>
</dbReference>
<dbReference type="InterPro" id="IPR043502">
    <property type="entry name" value="DNA/RNA_pol_sf"/>
</dbReference>
<dbReference type="InterPro" id="IPR000605">
    <property type="entry name" value="Helicase_SF3_ssDNA/RNA_vir"/>
</dbReference>
<dbReference type="InterPro" id="IPR014759">
    <property type="entry name" value="Helicase_SF3_ssRNA_vir"/>
</dbReference>
<dbReference type="InterPro" id="IPR044067">
    <property type="entry name" value="PCV_3C_PRO"/>
</dbReference>
<dbReference type="InterPro" id="IPR000199">
    <property type="entry name" value="Peptidase_C3A/C3B_picornavir"/>
</dbReference>
<dbReference type="InterPro" id="IPR009003">
    <property type="entry name" value="Peptidase_S1_PA"/>
</dbReference>
<dbReference type="InterPro" id="IPR043504">
    <property type="entry name" value="Peptidase_S1_PA_chymotrypsin"/>
</dbReference>
<dbReference type="InterPro" id="IPR043128">
    <property type="entry name" value="Rev_trsase/Diguanyl_cyclase"/>
</dbReference>
<dbReference type="InterPro" id="IPR001205">
    <property type="entry name" value="RNA-dir_pol_C"/>
</dbReference>
<dbReference type="InterPro" id="IPR007094">
    <property type="entry name" value="RNA-dir_pol_PSvirus"/>
</dbReference>
<dbReference type="Pfam" id="PF00548">
    <property type="entry name" value="Peptidase_C3"/>
    <property type="match status" value="1"/>
</dbReference>
<dbReference type="Pfam" id="PF00680">
    <property type="entry name" value="RdRP_1"/>
    <property type="match status" value="1"/>
</dbReference>
<dbReference type="Pfam" id="PF00910">
    <property type="entry name" value="RNA_helicase"/>
    <property type="match status" value="1"/>
</dbReference>
<dbReference type="SUPFAM" id="SSF56672">
    <property type="entry name" value="DNA/RNA polymerases"/>
    <property type="match status" value="1"/>
</dbReference>
<dbReference type="SUPFAM" id="SSF50494">
    <property type="entry name" value="Trypsin-like serine proteases"/>
    <property type="match status" value="1"/>
</dbReference>
<dbReference type="PROSITE" id="PS51874">
    <property type="entry name" value="PCV_3C_PRO"/>
    <property type="match status" value="1"/>
</dbReference>
<dbReference type="PROSITE" id="PS50507">
    <property type="entry name" value="RDRP_SSRNA_POS"/>
    <property type="match status" value="1"/>
</dbReference>
<dbReference type="PROSITE" id="PS51218">
    <property type="entry name" value="SF3_HELICASE_2"/>
    <property type="match status" value="1"/>
</dbReference>
<feature type="chain" id="PRO_0000445836" description="RNA1 polyprotein">
    <location>
        <begin position="1"/>
        <end position="1864"/>
    </location>
</feature>
<feature type="chain" id="PRO_0000037016" description="Protease cofactor">
    <location>
        <begin position="1"/>
        <end position="315"/>
    </location>
</feature>
<feature type="chain" id="PRO_0000037017" description="Putative helicase">
    <location>
        <begin position="316"/>
        <end position="915"/>
    </location>
</feature>
<feature type="chain" id="PRO_0000037018" description="Viral genome-linked protein">
    <location>
        <begin position="916"/>
        <end position="943"/>
    </location>
</feature>
<feature type="chain" id="PRO_0000037019" description="Picornain 3C-like protease">
    <location>
        <begin position="944"/>
        <end position="1151"/>
    </location>
</feature>
<feature type="chain" id="PRO_0000037020" description="RNA-directed RNA polymerase">
    <location>
        <begin position="1152"/>
        <end position="1864"/>
    </location>
</feature>
<feature type="transmembrane region" description="Helical" evidence="2">
    <location>
        <begin position="892"/>
        <end position="912"/>
    </location>
</feature>
<feature type="domain" description="SF3 helicase" evidence="4">
    <location>
        <begin position="457"/>
        <end position="622"/>
    </location>
</feature>
<feature type="domain" description="Peptidase C3" evidence="5">
    <location>
        <begin position="943"/>
        <end position="1146"/>
    </location>
</feature>
<feature type="domain" description="RdRp catalytic" evidence="3">
    <location>
        <begin position="1426"/>
        <end position="1556"/>
    </location>
</feature>
<feature type="active site" description="For picornain 3C-like protease activity" evidence="5">
    <location>
        <position position="983"/>
    </location>
</feature>
<feature type="active site" description="For picornain 3C-like protease activity" evidence="5">
    <location>
        <position position="1019"/>
    </location>
</feature>
<feature type="active site" description="For picornain 3C-like protease activity" evidence="5">
    <location>
        <position position="1109"/>
    </location>
</feature>
<feature type="binding site" evidence="4">
    <location>
        <begin position="483"/>
        <end position="490"/>
    </location>
    <ligand>
        <name>ATP</name>
        <dbReference type="ChEBI" id="CHEBI:30616"/>
    </ligand>
</feature>
<feature type="site" description="Cleavage; by viral protease" evidence="1">
    <location>
        <begin position="315"/>
        <end position="316"/>
    </location>
</feature>
<feature type="site" description="Cleavage; by viral protease" evidence="1">
    <location>
        <begin position="915"/>
        <end position="916"/>
    </location>
</feature>
<feature type="site" description="Cleavage; by viral protease" evidence="1">
    <location>
        <begin position="943"/>
        <end position="944"/>
    </location>
</feature>
<feature type="site" description="Cleavage; by viral protease" evidence="1">
    <location>
        <begin position="1151"/>
        <end position="1152"/>
    </location>
</feature>
<feature type="modified residue" description="O-(5'-phospho-RNA)-serine" evidence="1">
    <location>
        <position position="916"/>
    </location>
</feature>
<keyword id="KW-0067">ATP-binding</keyword>
<keyword id="KW-0191">Covalent protein-RNA linkage</keyword>
<keyword id="KW-0347">Helicase</keyword>
<keyword id="KW-1035">Host cytoplasm</keyword>
<keyword id="KW-1038">Host endoplasmic reticulum</keyword>
<keyword id="KW-1043">Host membrane</keyword>
<keyword id="KW-0378">Hydrolase</keyword>
<keyword id="KW-0472">Membrane</keyword>
<keyword id="KW-0547">Nucleotide-binding</keyword>
<keyword id="KW-0548">Nucleotidyltransferase</keyword>
<keyword id="KW-0597">Phosphoprotein</keyword>
<keyword id="KW-0645">Protease</keyword>
<keyword id="KW-0696">RNA-directed RNA polymerase</keyword>
<keyword id="KW-0788">Thiol protease</keyword>
<keyword id="KW-0808">Transferase</keyword>
<keyword id="KW-0812">Transmembrane</keyword>
<keyword id="KW-1133">Transmembrane helix</keyword>
<keyword id="KW-0693">Viral RNA replication</keyword>
<evidence type="ECO:0000250" key="1">
    <source>
        <dbReference type="UniProtKB" id="P03600"/>
    </source>
</evidence>
<evidence type="ECO:0000255" key="2"/>
<evidence type="ECO:0000255" key="3">
    <source>
        <dbReference type="PROSITE-ProRule" id="PRU00539"/>
    </source>
</evidence>
<evidence type="ECO:0000255" key="4">
    <source>
        <dbReference type="PROSITE-ProRule" id="PRU00551"/>
    </source>
</evidence>
<evidence type="ECO:0000255" key="5">
    <source>
        <dbReference type="PROSITE-ProRule" id="PRU01222"/>
    </source>
</evidence>
<protein>
    <recommendedName>
        <fullName>RNA1 polyprotein</fullName>
    </recommendedName>
    <alternativeName>
        <fullName>Genome polyprotein B</fullName>
    </alternativeName>
    <alternativeName>
        <fullName>P1</fullName>
    </alternativeName>
    <component>
        <recommendedName>
            <fullName>Protease cofactor</fullName>
        </recommendedName>
        <alternativeName>
            <fullName>32 kDa protein</fullName>
        </alternativeName>
    </component>
    <component>
        <recommendedName>
            <fullName>Putative helicase</fullName>
            <ecNumber>3.6.4.-</ecNumber>
        </recommendedName>
        <alternativeName>
            <fullName>58 kDa protein</fullName>
        </alternativeName>
        <alternativeName>
            <fullName>Membrane-binding protein</fullName>
        </alternativeName>
        <alternativeName>
            <fullName>NTP-binding protein</fullName>
            <shortName>NTB</shortName>
        </alternativeName>
    </component>
    <component>
        <recommendedName>
            <fullName>Viral genome-linked protein</fullName>
        </recommendedName>
        <alternativeName>
            <fullName>VPg</fullName>
        </alternativeName>
    </component>
    <component>
        <recommendedName>
            <fullName>Picornain 3C-like protease</fullName>
            <shortName>3C-like protease</shortName>
            <ecNumber evidence="1">3.4.22.-</ecNumber>
        </recommendedName>
        <alternativeName>
            <fullName>24 kDa protein</fullName>
        </alternativeName>
    </component>
    <component>
        <recommendedName>
            <fullName evidence="3">RNA-directed RNA polymerase</fullName>
            <ecNumber evidence="3">2.7.7.48</ecNumber>
        </recommendedName>
        <alternativeName>
            <fullName>87 kDa protein</fullName>
        </alternativeName>
    </component>
</protein>
<sequence>MYMLTFEPGLCVAGIIRQVRSNPFMHVVQAYARTTETYREDIEMTKSMLKLKADEPLLVMSIVAAAMDFQTMVMAPIEMEASEFLYGFYAERMSYIVTNRGMSELHEYIQLQCQRHLLVKVEIDGQYLVQEHEYEAQGFNIKRVKELITDVATWVPKKVKGMIGWSVDAVLDSFQEYFYKVITERIPMAMKVCSWVATVWDQIKTWIEDAMTAMSSFLQGCNELLTWGLATLAACCALNVLERILIFMEFLDESIDIAGIFLRTGVVAAACYHFSSTAKGFTEMMSVLSVATTAVAAVVCANYFGGSKTKKVNAQGNPVDLLERIAAGLSSISQDSLVSLGKSCSAINSIATSYGHLRNFAGRVLTMLRDFAWKILGLETRFLADAALVFGEDVDGWLQRISALREAYVSKAYSSQDEVFEMNVLLERGYKMRHLMATGSRVSPAIGNMLMQGLADLERLHRNAAVQGVKGVRKIPFTVFAHGNSRCGKSLLIGKLISDFQEHKGLGEDTVYSRNTTETHWSGYRRQPIVVIDDFAAVESDISAEAQLINLVSSTPYSVVMAAIEEKGMTFDSQFIFASTNFLEVSPNGKIRCDDAFRNRRHVLIDVKLKPEVEYQSDDFTANQSYNILEHSHGRYNVVATFDNYEELLAYCLTKHEQHEAEQEANLAKLRRTNKFESHFKKFEQVLQLSTYFSSSIERIKREALATTDGADDYHLLYVVPRNGSYLHVAANKDFQIQQWYGPVEEVAEEDILRASERMLLGAYEFLLLSTELNVVVKNHLPELICTDNYDHNLEFCGVVGDPVYHQQLLKNIRALKPWHRAVLFGIGTLMGAKNPTPWYKRMWEGIKDVLYKAYSTEISQWPVPLKITCGIVLVGIVGAGFWKTVSVLTNAGNGAGLVGAAVNSFSVVSTAEAQSRKPNRFEVQQYRYKNVPLTRRSWGNAQMSLDQSTVSILNKCHAKFIIASQHAQIVLVPGRRFIGYSHFFCNLKHPLMVQIETADRTYFHRYQPENMEYIEDSELCVYHSSCLEDISHSCWDLFCWDPDKELPKKFSADFVSCKYNTWTKSVEPTWANVDAEVIKEDFTICDGEYRNTVSTSIRYEAPTVMSDCGSMIITNVGGKTKIVGIHVAGRDNKIGMASLLPPLLPCAQAQGAEKYFNFYPIEYDAAEGIARVGELKPKLYIPLPKKTSLVKTPEEWHLGTPCDKVPSILVKGDPRLADTVHADYDPCLSGLTKYSTPMSPLDSVLLGETCQEILDEWFDCLPEGFELGEVTINEALNGVDGVDYMDRIPLATSEGFPHVMSREQGEKGKQRFVQGDGHIVSLIPGTSVHEAYETLSRTIATEVPTLVGIECPKDEKLPFRKVFTKPKTRNFTILPMEYNILVRQYFLNFVRFIMKKRDVLPCQVGINPYSMEWSIVASRLKSQGNDILCCDYSSFDGLLSKQIMEMMADMINRFCGGGTLICAKRKNLLMACCSRLAISRDSVWRIECGIPSGFPLTVICNSIFNEILVRYHYKLLLQEHNAPNMYVQSFKNLISMVTYGDDNLISVNAVVKPYFDGTKLKQAMARNGIIITDGKDKTSATLEFRRLEDCDFLKRGFLKRSSVLWDAPEEKASLWAQLHYVNVNNCEMQVAYMTNLVNVLRELYMHDPTEMVEFRRLALKSIPWLNTTDLPTLYQVKEFYAEQRLRNIPDHNDSLDMLTSVDLLGPAILGEGVPQEALVLSELLEVRDLRYHTVPDNDNGKEVWILFNTMYPQKLLPSNCHSFTWNCGQGRGGLPTQHWLATNVTRTDSKLNKLIRTAVAANKKIVLATKDNILPINVIAVLLAARNKVMPSLATNALLTYVIGAAKKLNFLTSECQFAFFNV</sequence>
<organism>
    <name type="scientific">Red clover mottle virus</name>
    <name type="common">RCMV</name>
    <dbReference type="NCBI Taxonomy" id="12262"/>
    <lineage>
        <taxon>Viruses</taxon>
        <taxon>Riboviria</taxon>
        <taxon>Orthornavirae</taxon>
        <taxon>Pisuviricota</taxon>
        <taxon>Pisoniviricetes</taxon>
        <taxon>Picornavirales</taxon>
        <taxon>Secoviridae</taxon>
        <taxon>Comovirinae</taxon>
        <taxon>Comovirus</taxon>
        <taxon>Comovirus trifolii</taxon>
    </lineage>
</organism>
<accession>P35930</accession>
<accession>Q66182</accession>
<comment type="function">
    <molecule>Picornain 3C-like protease</molecule>
    <text evidence="1">Thiol protease that cleaves the RNA1 and RNA2 polyproteins.</text>
</comment>
<comment type="function">
    <molecule>Viral genome-linked protein</molecule>
    <text evidence="1">Plays a role in RNA replication. It is covalently linked to the 5'terminus of both viral single-stranded RNA1 and RNA2 molecules.</text>
</comment>
<comment type="function">
    <molecule>Protease cofactor</molecule>
    <text evidence="1">Down-regulates the RNA1 polyprotein processing and enhances trans-cleavage of RNA2 polyproteins. The protease cofactor and the putative helicase seem to target the replication complexes to ER membranes. Their physical association causes the membrane rearrangement of host ER that may result in formation of the small membranous vesicles that are the site of viral RNA synthesis.</text>
</comment>
<comment type="function">
    <molecule>Putative helicase</molecule>
    <text evidence="1">The protease cofactor and the putative helicase seem to target the replication complexes to ER membranes. Their physical association causes the membrane rearrangement of host ER that may result in formation of the small membranous vesicles that are the site of viral RNA synthesis.</text>
</comment>
<comment type="function">
    <molecule>RNA-directed RNA polymerase</molecule>
    <text evidence="1">Replicates the viral genome.</text>
</comment>
<comment type="catalytic activity">
    <reaction evidence="3">
        <text>RNA(n) + a ribonucleoside 5'-triphosphate = RNA(n+1) + diphosphate</text>
        <dbReference type="Rhea" id="RHEA:21248"/>
        <dbReference type="Rhea" id="RHEA-COMP:14527"/>
        <dbReference type="Rhea" id="RHEA-COMP:17342"/>
        <dbReference type="ChEBI" id="CHEBI:33019"/>
        <dbReference type="ChEBI" id="CHEBI:61557"/>
        <dbReference type="ChEBI" id="CHEBI:140395"/>
        <dbReference type="EC" id="2.7.7.48"/>
    </reaction>
</comment>
<comment type="subcellular location">
    <molecule>Putative helicase</molecule>
    <subcellularLocation>
        <location evidence="1">Host membrane</location>
        <topology evidence="1">Single-pass membrane protein</topology>
    </subcellularLocation>
    <subcellularLocation>
        <location evidence="1">Host cytoplasm</location>
        <location evidence="1">Host perinuclear region</location>
    </subcellularLocation>
</comment>
<comment type="subcellular location">
    <molecule>RNA-directed RNA polymerase</molecule>
    <subcellularLocation>
        <location evidence="1">Host endoplasmic reticulum</location>
    </subcellularLocation>
</comment>
<comment type="subcellular location">
    <molecule>Protease cofactor</molecule>
    <subcellularLocation>
        <location evidence="1">Host cytoplasm</location>
        <location evidence="1">Host perinuclear region</location>
    </subcellularLocation>
</comment>
<comment type="PTM">
    <molecule>RNA1 polyprotein</molecule>
    <text evidence="1">Specific enzymatic cleavages by picornain 3C-like protease in vivo yield mature proteins. Picornain 3C-like protease is autocatalytically processed.</text>
</comment>
<comment type="PTM">
    <molecule>Viral genome-linked protein</molecule>
    <text evidence="1">Uridylylated by the polymerase and is covalently linked to the 5'-end of genomic RNA. This uridylylated form acts as a nucleotide-peptide primer for the polymerase.</text>
</comment>